<keyword id="KW-0028">Amino-acid biosynthesis</keyword>
<keyword id="KW-0057">Aromatic amino acid biosynthesis</keyword>
<keyword id="KW-0067">ATP-binding</keyword>
<keyword id="KW-0963">Cytoplasm</keyword>
<keyword id="KW-0418">Kinase</keyword>
<keyword id="KW-0460">Magnesium</keyword>
<keyword id="KW-0479">Metal-binding</keyword>
<keyword id="KW-0547">Nucleotide-binding</keyword>
<keyword id="KW-0808">Transferase</keyword>
<proteinExistence type="inferred from homology"/>
<accession>A5FNY2</accession>
<protein>
    <recommendedName>
        <fullName evidence="1">Shikimate kinase</fullName>
        <shortName evidence="1">SK</shortName>
        <ecNumber evidence="1">2.7.1.71</ecNumber>
    </recommendedName>
</protein>
<gene>
    <name evidence="1" type="primary">aroK</name>
    <name type="ordered locus">Fjoh_0053</name>
</gene>
<reference key="1">
    <citation type="journal article" date="2009" name="Appl. Environ. Microbiol.">
        <title>Novel features of the polysaccharide-digesting gliding bacterium Flavobacterium johnsoniae as revealed by genome sequence analysis.</title>
        <authorList>
            <person name="McBride M.J."/>
            <person name="Xie G."/>
            <person name="Martens E.C."/>
            <person name="Lapidus A."/>
            <person name="Henrissat B."/>
            <person name="Rhodes R.G."/>
            <person name="Goltsman E."/>
            <person name="Wang W."/>
            <person name="Xu J."/>
            <person name="Hunnicutt D.W."/>
            <person name="Staroscik A.M."/>
            <person name="Hoover T.R."/>
            <person name="Cheng Y.Q."/>
            <person name="Stein J.L."/>
        </authorList>
    </citation>
    <scope>NUCLEOTIDE SEQUENCE [LARGE SCALE GENOMIC DNA]</scope>
    <source>
        <strain>ATCC 17061 / DSM 2064 / JCM 8514 / BCRC 14874 / CCUG 350202 / NBRC 14942 / NCIMB 11054 / UW101</strain>
    </source>
</reference>
<comment type="function">
    <text evidence="1">Catalyzes the specific phosphorylation of the 3-hydroxyl group of shikimic acid using ATP as a cosubstrate.</text>
</comment>
<comment type="catalytic activity">
    <reaction evidence="1">
        <text>shikimate + ATP = 3-phosphoshikimate + ADP + H(+)</text>
        <dbReference type="Rhea" id="RHEA:13121"/>
        <dbReference type="ChEBI" id="CHEBI:15378"/>
        <dbReference type="ChEBI" id="CHEBI:30616"/>
        <dbReference type="ChEBI" id="CHEBI:36208"/>
        <dbReference type="ChEBI" id="CHEBI:145989"/>
        <dbReference type="ChEBI" id="CHEBI:456216"/>
        <dbReference type="EC" id="2.7.1.71"/>
    </reaction>
</comment>
<comment type="cofactor">
    <cofactor evidence="1">
        <name>Mg(2+)</name>
        <dbReference type="ChEBI" id="CHEBI:18420"/>
    </cofactor>
    <text evidence="1">Binds 1 Mg(2+) ion per subunit.</text>
</comment>
<comment type="pathway">
    <text evidence="1">Metabolic intermediate biosynthesis; chorismate biosynthesis; chorismate from D-erythrose 4-phosphate and phosphoenolpyruvate: step 5/7.</text>
</comment>
<comment type="subunit">
    <text evidence="1">Monomer.</text>
</comment>
<comment type="subcellular location">
    <subcellularLocation>
        <location evidence="1">Cytoplasm</location>
    </subcellularLocation>
</comment>
<comment type="similarity">
    <text evidence="1">Belongs to the shikimate kinase family.</text>
</comment>
<organism>
    <name type="scientific">Flavobacterium johnsoniae (strain ATCC 17061 / DSM 2064 / JCM 8514 / BCRC 14874 / CCUG 350202 / NBRC 14942 / NCIMB 11054 / UW101)</name>
    <name type="common">Cytophaga johnsonae</name>
    <dbReference type="NCBI Taxonomy" id="376686"/>
    <lineage>
        <taxon>Bacteria</taxon>
        <taxon>Pseudomonadati</taxon>
        <taxon>Bacteroidota</taxon>
        <taxon>Flavobacteriia</taxon>
        <taxon>Flavobacteriales</taxon>
        <taxon>Flavobacteriaceae</taxon>
        <taxon>Flavobacterium</taxon>
    </lineage>
</organism>
<evidence type="ECO:0000255" key="1">
    <source>
        <dbReference type="HAMAP-Rule" id="MF_00109"/>
    </source>
</evidence>
<dbReference type="EC" id="2.7.1.71" evidence="1"/>
<dbReference type="EMBL" id="CP000685">
    <property type="protein sequence ID" value="ABQ03091.1"/>
    <property type="molecule type" value="Genomic_DNA"/>
</dbReference>
<dbReference type="RefSeq" id="WP_011921571.1">
    <property type="nucleotide sequence ID" value="NC_009441.1"/>
</dbReference>
<dbReference type="SMR" id="A5FNY2"/>
<dbReference type="STRING" id="376686.Fjoh_0053"/>
<dbReference type="KEGG" id="fjo:Fjoh_0053"/>
<dbReference type="eggNOG" id="COG0703">
    <property type="taxonomic scope" value="Bacteria"/>
</dbReference>
<dbReference type="HOGENOM" id="CLU_057607_4_0_10"/>
<dbReference type="OrthoDB" id="9800332at2"/>
<dbReference type="UniPathway" id="UPA00053">
    <property type="reaction ID" value="UER00088"/>
</dbReference>
<dbReference type="Proteomes" id="UP000006694">
    <property type="component" value="Chromosome"/>
</dbReference>
<dbReference type="GO" id="GO:0005829">
    <property type="term" value="C:cytosol"/>
    <property type="evidence" value="ECO:0007669"/>
    <property type="project" value="TreeGrafter"/>
</dbReference>
<dbReference type="GO" id="GO:0005524">
    <property type="term" value="F:ATP binding"/>
    <property type="evidence" value="ECO:0007669"/>
    <property type="project" value="UniProtKB-UniRule"/>
</dbReference>
<dbReference type="GO" id="GO:0000287">
    <property type="term" value="F:magnesium ion binding"/>
    <property type="evidence" value="ECO:0007669"/>
    <property type="project" value="UniProtKB-UniRule"/>
</dbReference>
<dbReference type="GO" id="GO:0004765">
    <property type="term" value="F:shikimate kinase activity"/>
    <property type="evidence" value="ECO:0007669"/>
    <property type="project" value="UniProtKB-UniRule"/>
</dbReference>
<dbReference type="GO" id="GO:0008652">
    <property type="term" value="P:amino acid biosynthetic process"/>
    <property type="evidence" value="ECO:0007669"/>
    <property type="project" value="UniProtKB-KW"/>
</dbReference>
<dbReference type="GO" id="GO:0009073">
    <property type="term" value="P:aromatic amino acid family biosynthetic process"/>
    <property type="evidence" value="ECO:0007669"/>
    <property type="project" value="UniProtKB-KW"/>
</dbReference>
<dbReference type="GO" id="GO:0009423">
    <property type="term" value="P:chorismate biosynthetic process"/>
    <property type="evidence" value="ECO:0007669"/>
    <property type="project" value="UniProtKB-UniRule"/>
</dbReference>
<dbReference type="CDD" id="cd00464">
    <property type="entry name" value="SK"/>
    <property type="match status" value="1"/>
</dbReference>
<dbReference type="Gene3D" id="3.40.50.300">
    <property type="entry name" value="P-loop containing nucleotide triphosphate hydrolases"/>
    <property type="match status" value="1"/>
</dbReference>
<dbReference type="HAMAP" id="MF_00109">
    <property type="entry name" value="Shikimate_kinase"/>
    <property type="match status" value="1"/>
</dbReference>
<dbReference type="InterPro" id="IPR027417">
    <property type="entry name" value="P-loop_NTPase"/>
</dbReference>
<dbReference type="InterPro" id="IPR031322">
    <property type="entry name" value="Shikimate/glucono_kinase"/>
</dbReference>
<dbReference type="InterPro" id="IPR000623">
    <property type="entry name" value="Shikimate_kinase/TSH1"/>
</dbReference>
<dbReference type="PANTHER" id="PTHR21087">
    <property type="entry name" value="SHIKIMATE KINASE"/>
    <property type="match status" value="1"/>
</dbReference>
<dbReference type="PANTHER" id="PTHR21087:SF16">
    <property type="entry name" value="SHIKIMATE KINASE 1, CHLOROPLASTIC"/>
    <property type="match status" value="1"/>
</dbReference>
<dbReference type="Pfam" id="PF01202">
    <property type="entry name" value="SKI"/>
    <property type="match status" value="1"/>
</dbReference>
<dbReference type="PRINTS" id="PR01100">
    <property type="entry name" value="SHIKIMTKNASE"/>
</dbReference>
<dbReference type="SUPFAM" id="SSF52540">
    <property type="entry name" value="P-loop containing nucleoside triphosphate hydrolases"/>
    <property type="match status" value="1"/>
</dbReference>
<sequence>MEKIVLLGYMGCGKSTIAQNLSKITQIPFLDLDICIEKRANLSIKEIFEQHGEIYFRKLEHEMFLELLQSSENAIIGLGGGTPCYANNHLLLQRDDIVSVYLKASIDTLYNRLVHNKSKRPLIANMDEEEMKEFIAKHLFDRSFYYNHAQHKVAVDNRTIDETVQDILDILA</sequence>
<feature type="chain" id="PRO_1000094390" description="Shikimate kinase">
    <location>
        <begin position="1"/>
        <end position="172"/>
    </location>
</feature>
<feature type="binding site" evidence="1">
    <location>
        <begin position="11"/>
        <end position="16"/>
    </location>
    <ligand>
        <name>ATP</name>
        <dbReference type="ChEBI" id="CHEBI:30616"/>
    </ligand>
</feature>
<feature type="binding site" evidence="1">
    <location>
        <position position="15"/>
    </location>
    <ligand>
        <name>Mg(2+)</name>
        <dbReference type="ChEBI" id="CHEBI:18420"/>
    </ligand>
</feature>
<feature type="binding site" evidence="1">
    <location>
        <position position="33"/>
    </location>
    <ligand>
        <name>substrate</name>
    </ligand>
</feature>
<feature type="binding site" evidence="1">
    <location>
        <position position="57"/>
    </location>
    <ligand>
        <name>substrate</name>
    </ligand>
</feature>
<feature type="binding site" evidence="1">
    <location>
        <position position="80"/>
    </location>
    <ligand>
        <name>substrate</name>
    </ligand>
</feature>
<feature type="binding site" evidence="1">
    <location>
        <position position="120"/>
    </location>
    <ligand>
        <name>ATP</name>
        <dbReference type="ChEBI" id="CHEBI:30616"/>
    </ligand>
</feature>
<feature type="binding site" evidence="1">
    <location>
        <position position="142"/>
    </location>
    <ligand>
        <name>substrate</name>
    </ligand>
</feature>
<feature type="binding site" evidence="1">
    <location>
        <position position="158"/>
    </location>
    <ligand>
        <name>ATP</name>
        <dbReference type="ChEBI" id="CHEBI:30616"/>
    </ligand>
</feature>
<name>AROK_FLAJ1</name>